<protein>
    <recommendedName>
        <fullName evidence="1">Peptide chain release factor 1</fullName>
        <shortName evidence="1">RF-1</shortName>
    </recommendedName>
</protein>
<organism>
    <name type="scientific">Staphylococcus aureus (strain JH1)</name>
    <dbReference type="NCBI Taxonomy" id="359787"/>
    <lineage>
        <taxon>Bacteria</taxon>
        <taxon>Bacillati</taxon>
        <taxon>Bacillota</taxon>
        <taxon>Bacilli</taxon>
        <taxon>Bacillales</taxon>
        <taxon>Staphylococcaceae</taxon>
        <taxon>Staphylococcus</taxon>
    </lineage>
</organism>
<dbReference type="EMBL" id="CP000736">
    <property type="protein sequence ID" value="ABR53021.1"/>
    <property type="molecule type" value="Genomic_DNA"/>
</dbReference>
<dbReference type="SMR" id="A6U3K3"/>
<dbReference type="KEGG" id="sah:SaurJH1_2192"/>
<dbReference type="HOGENOM" id="CLU_036856_0_1_9"/>
<dbReference type="GO" id="GO:0005737">
    <property type="term" value="C:cytoplasm"/>
    <property type="evidence" value="ECO:0007669"/>
    <property type="project" value="UniProtKB-SubCell"/>
</dbReference>
<dbReference type="GO" id="GO:0016149">
    <property type="term" value="F:translation release factor activity, codon specific"/>
    <property type="evidence" value="ECO:0007669"/>
    <property type="project" value="UniProtKB-UniRule"/>
</dbReference>
<dbReference type="FunFam" id="3.30.160.20:FF:000004">
    <property type="entry name" value="Peptide chain release factor 1"/>
    <property type="match status" value="1"/>
</dbReference>
<dbReference type="FunFam" id="3.30.70.1660:FF:000002">
    <property type="entry name" value="Peptide chain release factor 1"/>
    <property type="match status" value="1"/>
</dbReference>
<dbReference type="FunFam" id="3.30.70.1660:FF:000004">
    <property type="entry name" value="Peptide chain release factor 1"/>
    <property type="match status" value="1"/>
</dbReference>
<dbReference type="Gene3D" id="3.30.160.20">
    <property type="match status" value="1"/>
</dbReference>
<dbReference type="Gene3D" id="3.30.70.1660">
    <property type="match status" value="1"/>
</dbReference>
<dbReference type="Gene3D" id="6.10.140.1950">
    <property type="match status" value="1"/>
</dbReference>
<dbReference type="HAMAP" id="MF_00093">
    <property type="entry name" value="Rel_fac_1"/>
    <property type="match status" value="1"/>
</dbReference>
<dbReference type="InterPro" id="IPR005139">
    <property type="entry name" value="PCRF"/>
</dbReference>
<dbReference type="InterPro" id="IPR000352">
    <property type="entry name" value="Pep_chain_release_fac_I"/>
</dbReference>
<dbReference type="InterPro" id="IPR045853">
    <property type="entry name" value="Pep_chain_release_fac_I_sf"/>
</dbReference>
<dbReference type="InterPro" id="IPR050057">
    <property type="entry name" value="Prokaryotic/Mito_RF"/>
</dbReference>
<dbReference type="InterPro" id="IPR004373">
    <property type="entry name" value="RF-1"/>
</dbReference>
<dbReference type="NCBIfam" id="TIGR00019">
    <property type="entry name" value="prfA"/>
    <property type="match status" value="1"/>
</dbReference>
<dbReference type="NCBIfam" id="NF001859">
    <property type="entry name" value="PRK00591.1"/>
    <property type="match status" value="1"/>
</dbReference>
<dbReference type="PANTHER" id="PTHR43804">
    <property type="entry name" value="LD18447P"/>
    <property type="match status" value="1"/>
</dbReference>
<dbReference type="PANTHER" id="PTHR43804:SF7">
    <property type="entry name" value="LD18447P"/>
    <property type="match status" value="1"/>
</dbReference>
<dbReference type="Pfam" id="PF03462">
    <property type="entry name" value="PCRF"/>
    <property type="match status" value="1"/>
</dbReference>
<dbReference type="Pfam" id="PF00472">
    <property type="entry name" value="RF-1"/>
    <property type="match status" value="1"/>
</dbReference>
<dbReference type="SMART" id="SM00937">
    <property type="entry name" value="PCRF"/>
    <property type="match status" value="1"/>
</dbReference>
<dbReference type="SUPFAM" id="SSF75620">
    <property type="entry name" value="Release factor"/>
    <property type="match status" value="1"/>
</dbReference>
<dbReference type="PROSITE" id="PS00745">
    <property type="entry name" value="RF_PROK_I"/>
    <property type="match status" value="1"/>
</dbReference>
<reference key="1">
    <citation type="submission" date="2007-06" db="EMBL/GenBank/DDBJ databases">
        <title>Complete sequence of chromosome of Staphylococcus aureus subsp. aureus JH1.</title>
        <authorList>
            <consortium name="US DOE Joint Genome Institute"/>
            <person name="Copeland A."/>
            <person name="Lucas S."/>
            <person name="Lapidus A."/>
            <person name="Barry K."/>
            <person name="Detter J.C."/>
            <person name="Glavina del Rio T."/>
            <person name="Hammon N."/>
            <person name="Israni S."/>
            <person name="Dalin E."/>
            <person name="Tice H."/>
            <person name="Pitluck S."/>
            <person name="Chain P."/>
            <person name="Malfatti S."/>
            <person name="Shin M."/>
            <person name="Vergez L."/>
            <person name="Schmutz J."/>
            <person name="Larimer F."/>
            <person name="Land M."/>
            <person name="Hauser L."/>
            <person name="Kyrpides N."/>
            <person name="Ivanova N."/>
            <person name="Tomasz A."/>
            <person name="Richardson P."/>
        </authorList>
    </citation>
    <scope>NUCLEOTIDE SEQUENCE [LARGE SCALE GENOMIC DNA]</scope>
    <source>
        <strain>JH1</strain>
    </source>
</reference>
<evidence type="ECO:0000255" key="1">
    <source>
        <dbReference type="HAMAP-Rule" id="MF_00093"/>
    </source>
</evidence>
<keyword id="KW-0963">Cytoplasm</keyword>
<keyword id="KW-0488">Methylation</keyword>
<keyword id="KW-0648">Protein biosynthesis</keyword>
<name>RF1_STAA2</name>
<comment type="function">
    <text evidence="1">Peptide chain release factor 1 directs the termination of translation in response to the peptide chain termination codons UAG and UAA.</text>
</comment>
<comment type="subcellular location">
    <subcellularLocation>
        <location evidence="1">Cytoplasm</location>
    </subcellularLocation>
</comment>
<comment type="PTM">
    <text evidence="1">Methylated by PrmC. Methylation increases the termination efficiency of RF1.</text>
</comment>
<comment type="similarity">
    <text evidence="1">Belongs to the prokaryotic/mitochondrial release factor family.</text>
</comment>
<sequence>MFDQLDIVEERYEQLNELLSDPDVVNDSDKLRKYSKEQADLQKTVDVYRNYKAKKEELADIEEMLSETDDKEEVEMLKEESNGIKAELPNLEEELKILLIPKDPNDDKDVIVEIRAAAGGDEAAIFAGDLMRMYSKYAESQGFKTEIVEASESDHGGYKEISFSVSGNGAYSKLKFENGAHRVQRVPETESGGRIHTSTATVAVLPEVEDVEIEIRNEDLKIDTYRSSGAGGQHVNTTDSAVRITHLPTGVIATSSEKSQIQNREKAMKVLKARLYDMKVQEEQQKYASQRKSAVGTGDRSERIRTYNYPQSRVTDHRIGLTLQKLGQIMEGHLEEIIDALTLSEQTDKLKELNNGEL</sequence>
<gene>
    <name evidence="1" type="primary">prfA</name>
    <name type="ordered locus">SaurJH1_2192</name>
</gene>
<proteinExistence type="inferred from homology"/>
<accession>A6U3K3</accession>
<feature type="chain" id="PRO_1000075518" description="Peptide chain release factor 1">
    <location>
        <begin position="1"/>
        <end position="358"/>
    </location>
</feature>
<feature type="modified residue" description="N5-methylglutamine" evidence="1">
    <location>
        <position position="233"/>
    </location>
</feature>